<dbReference type="EMBL" id="AE000516">
    <property type="protein sequence ID" value="AAK46278.1"/>
    <property type="molecule type" value="Genomic_DNA"/>
</dbReference>
<dbReference type="EMBL" id="JLBH01000002">
    <property type="protein sequence ID" value="KBN13170.1"/>
    <property type="molecule type" value="Genomic_DNA"/>
</dbReference>
<dbReference type="RefSeq" id="WP_003899098.1">
    <property type="nucleotide sequence ID" value="NZ_KK341227.1"/>
</dbReference>
<dbReference type="SMR" id="Q7D7P7"/>
<dbReference type="KEGG" id="mtc:MT2006"/>
<dbReference type="PATRIC" id="fig|83331.31.peg.2162"/>
<dbReference type="HOGENOM" id="CLU_1632606_0_0_11"/>
<dbReference type="Proteomes" id="UP000001020">
    <property type="component" value="Chromosome"/>
</dbReference>
<dbReference type="Gene3D" id="3.10.420.10">
    <property type="entry name" value="SecB-like"/>
    <property type="match status" value="1"/>
</dbReference>
<dbReference type="InterPro" id="IPR035958">
    <property type="entry name" value="SecB-like_sf"/>
</dbReference>
<dbReference type="SUPFAM" id="SSF54611">
    <property type="entry name" value="SecB-like"/>
    <property type="match status" value="1"/>
</dbReference>
<feature type="chain" id="PRO_0000432915" description="SecB-like chaperone MT2006">
    <location>
        <begin position="1"/>
        <end position="181"/>
    </location>
</feature>
<proteinExistence type="inferred from homology"/>
<keyword id="KW-0143">Chaperone</keyword>
<keyword id="KW-1185">Reference proteome</keyword>
<comment type="function">
    <text evidence="1">Chaperone component of an atypical, type II toxin-antitoxin chaperone (TAC) module, probably required for antitoxin HigA1 to neutralize its cognate toxin HigB1.</text>
</comment>
<comment type="subunit">
    <text evidence="1">Homotetramer, interacts with antitoxin HigA1.</text>
</comment>
<comment type="induction">
    <text evidence="1">Operon autorepressed by HigA1.</text>
</comment>
<comment type="similarity">
    <text evidence="2">Belongs to the SecB-like family.</text>
</comment>
<protein>
    <recommendedName>
        <fullName>SecB-like chaperone MT2006</fullName>
    </recommendedName>
</protein>
<sequence length="181" mass="20105">MTDRTDADDLDLQRVGARLAARAQIRDIRLLRTQAAVHRAPKPAQGLTYDLEFEPAVDADPATISAFVVRISCHLRIQNQAADNDVKEGDTKDETQDVATADFEFAALFDYHLQEGEDDPTEEELTAYAATTGRFALYPYIREYVYDLTGRLALPPLTLEILSRPMPVSPGAQWPATRGTP</sequence>
<name>SECBL_MYCTO</name>
<accession>Q7D7P7</accession>
<reference key="1">
    <citation type="journal article" date="2002" name="J. Bacteriol.">
        <title>Whole-genome comparison of Mycobacterium tuberculosis clinical and laboratory strains.</title>
        <authorList>
            <person name="Fleischmann R.D."/>
            <person name="Alland D."/>
            <person name="Eisen J.A."/>
            <person name="Carpenter L."/>
            <person name="White O."/>
            <person name="Peterson J.D."/>
            <person name="DeBoy R.T."/>
            <person name="Dodson R.J."/>
            <person name="Gwinn M.L."/>
            <person name="Haft D.H."/>
            <person name="Hickey E.K."/>
            <person name="Kolonay J.F."/>
            <person name="Nelson W.C."/>
            <person name="Umayam L.A."/>
            <person name="Ermolaeva M.D."/>
            <person name="Salzberg S.L."/>
            <person name="Delcher A."/>
            <person name="Utterback T.R."/>
            <person name="Weidman J.F."/>
            <person name="Khouri H.M."/>
            <person name="Gill J."/>
            <person name="Mikula A."/>
            <person name="Bishai W."/>
            <person name="Jacobs W.R. Jr."/>
            <person name="Venter J.C."/>
            <person name="Fraser C.M."/>
        </authorList>
    </citation>
    <scope>NUCLEOTIDE SEQUENCE [LARGE SCALE GENOMIC DNA]</scope>
    <source>
        <strain>CDC 1551 / Oshkosh</strain>
    </source>
</reference>
<reference key="2">
    <citation type="submission" date="2014-04" db="EMBL/GenBank/DDBJ databases">
        <title>The genome sequence of Mycobacterium tuberculosis CDC1551.</title>
        <authorList>
            <consortium name="The Broad Institute Genomics Platform"/>
            <consortium name="The Broad Institute Genome Sequencing Center for Infectious Disease"/>
            <person name="Earl A.M."/>
            <person name="Hung D."/>
            <person name="Gomez D."/>
            <person name="Hsueh P.R."/>
            <person name="Rozo J.C."/>
            <person name="Zambrano M.M."/>
            <person name="Desjardins C."/>
            <person name="Abeel T."/>
            <person name="Young S."/>
            <person name="Zeng Q."/>
            <person name="Gargeya S."/>
            <person name="Abouelleil A."/>
            <person name="Alvarado L."/>
            <person name="Chapman S.B."/>
            <person name="Gainer-Dewar J."/>
            <person name="Goldberg J."/>
            <person name="Griggs A."/>
            <person name="Gujja S."/>
            <person name="Hansen M."/>
            <person name="Howarth C."/>
            <person name="Imamovic A."/>
            <person name="Larimer J."/>
            <person name="Murphy C."/>
            <person name="Naylor J."/>
            <person name="Pearson M."/>
            <person name="Poon T.W."/>
            <person name="Priest M."/>
            <person name="Roberts A."/>
            <person name="Saif S."/>
            <person name="Shea T."/>
            <person name="Sykes S."/>
            <person name="Wortman J."/>
            <person name="Nusbaum C."/>
            <person name="Birren B."/>
        </authorList>
    </citation>
    <scope>NUCLEOTIDE SEQUENCE [LARGE SCALE GENOMIC DNA]</scope>
    <source>
        <strain>CDC 1551 / Oshkosh</strain>
    </source>
</reference>
<evidence type="ECO:0000250" key="1">
    <source>
        <dbReference type="UniProtKB" id="P95257"/>
    </source>
</evidence>
<evidence type="ECO:0000305" key="2"/>
<gene>
    <name type="primary">secBL</name>
    <name type="ordered locus">MT2006</name>
    <name type="ORF">V735_02010</name>
</gene>
<organism>
    <name type="scientific">Mycobacterium tuberculosis (strain CDC 1551 / Oshkosh)</name>
    <dbReference type="NCBI Taxonomy" id="83331"/>
    <lineage>
        <taxon>Bacteria</taxon>
        <taxon>Bacillati</taxon>
        <taxon>Actinomycetota</taxon>
        <taxon>Actinomycetes</taxon>
        <taxon>Mycobacteriales</taxon>
        <taxon>Mycobacteriaceae</taxon>
        <taxon>Mycobacterium</taxon>
        <taxon>Mycobacterium tuberculosis complex</taxon>
    </lineage>
</organism>